<evidence type="ECO:0000255" key="1">
    <source>
        <dbReference type="HAMAP-Rule" id="MF_00033"/>
    </source>
</evidence>
<name>MURG_TROWT</name>
<accession>Q820Y4</accession>
<proteinExistence type="inferred from homology"/>
<gene>
    <name evidence="1" type="primary">murG</name>
    <name type="ordered locus">TWT_228</name>
</gene>
<keyword id="KW-0131">Cell cycle</keyword>
<keyword id="KW-0132">Cell division</keyword>
<keyword id="KW-1003">Cell membrane</keyword>
<keyword id="KW-0133">Cell shape</keyword>
<keyword id="KW-0961">Cell wall biogenesis/degradation</keyword>
<keyword id="KW-0328">Glycosyltransferase</keyword>
<keyword id="KW-0472">Membrane</keyword>
<keyword id="KW-0573">Peptidoglycan synthesis</keyword>
<keyword id="KW-1185">Reference proteome</keyword>
<keyword id="KW-0808">Transferase</keyword>
<protein>
    <recommendedName>
        <fullName evidence="1">UDP-N-acetylglucosamine--N-acetylmuramyl-(pentapeptide) pyrophosphoryl-undecaprenol N-acetylglucosamine transferase</fullName>
        <ecNumber evidence="1">2.4.1.227</ecNumber>
    </recommendedName>
    <alternativeName>
        <fullName evidence="1">Undecaprenyl-PP-MurNAc-pentapeptide-UDPGlcNAc GlcNAc transferase</fullName>
    </alternativeName>
</protein>
<reference key="1">
    <citation type="journal article" date="2003" name="Genome Res.">
        <title>Tropheryma whipplei twist: a human pathogenic Actinobacteria with a reduced genome.</title>
        <authorList>
            <person name="Raoult D."/>
            <person name="Ogata H."/>
            <person name="Audic S."/>
            <person name="Robert C."/>
            <person name="Suhre K."/>
            <person name="Drancourt M."/>
            <person name="Claverie J.-M."/>
        </authorList>
    </citation>
    <scope>NUCLEOTIDE SEQUENCE [LARGE SCALE GENOMIC DNA]</scope>
    <source>
        <strain>Twist</strain>
    </source>
</reference>
<feature type="chain" id="PRO_0000315197" description="UDP-N-acetylglucosamine--N-acetylmuramyl-(pentapeptide) pyrophosphoryl-undecaprenol N-acetylglucosamine transferase">
    <location>
        <begin position="1"/>
        <end position="356"/>
    </location>
</feature>
<feature type="binding site" evidence="1">
    <location>
        <begin position="11"/>
        <end position="13"/>
    </location>
    <ligand>
        <name>UDP-N-acetyl-alpha-D-glucosamine</name>
        <dbReference type="ChEBI" id="CHEBI:57705"/>
    </ligand>
</feature>
<feature type="binding site" evidence="1">
    <location>
        <position position="123"/>
    </location>
    <ligand>
        <name>UDP-N-acetyl-alpha-D-glucosamine</name>
        <dbReference type="ChEBI" id="CHEBI:57705"/>
    </ligand>
</feature>
<feature type="binding site" evidence="1">
    <location>
        <position position="159"/>
    </location>
    <ligand>
        <name>UDP-N-acetyl-alpha-D-glucosamine</name>
        <dbReference type="ChEBI" id="CHEBI:57705"/>
    </ligand>
</feature>
<feature type="binding site" evidence="1">
    <location>
        <position position="192"/>
    </location>
    <ligand>
        <name>UDP-N-acetyl-alpha-D-glucosamine</name>
        <dbReference type="ChEBI" id="CHEBI:57705"/>
    </ligand>
</feature>
<dbReference type="EC" id="2.4.1.227" evidence="1"/>
<dbReference type="EMBL" id="AE014184">
    <property type="protein sequence ID" value="AAO44325.1"/>
    <property type="molecule type" value="Genomic_DNA"/>
</dbReference>
<dbReference type="RefSeq" id="WP_011096488.1">
    <property type="nucleotide sequence ID" value="NC_004572.3"/>
</dbReference>
<dbReference type="SMR" id="Q820Y4"/>
<dbReference type="STRING" id="203267.TWT_228"/>
<dbReference type="CAZy" id="GT28">
    <property type="family name" value="Glycosyltransferase Family 28"/>
</dbReference>
<dbReference type="KEGG" id="twh:TWT_228"/>
<dbReference type="eggNOG" id="COG0707">
    <property type="taxonomic scope" value="Bacteria"/>
</dbReference>
<dbReference type="HOGENOM" id="CLU_037404_1_0_11"/>
<dbReference type="OrthoDB" id="9808936at2"/>
<dbReference type="UniPathway" id="UPA00219"/>
<dbReference type="Proteomes" id="UP000002200">
    <property type="component" value="Chromosome"/>
</dbReference>
<dbReference type="GO" id="GO:0005886">
    <property type="term" value="C:plasma membrane"/>
    <property type="evidence" value="ECO:0007669"/>
    <property type="project" value="UniProtKB-SubCell"/>
</dbReference>
<dbReference type="GO" id="GO:0051991">
    <property type="term" value="F:UDP-N-acetyl-D-glucosamine:N-acetylmuramoyl-L-alanyl-D-glutamyl-meso-2,6-diaminopimelyl-D-alanyl-D-alanine-diphosphoundecaprenol 4-beta-N-acetylglucosaminlytransferase activity"/>
    <property type="evidence" value="ECO:0007669"/>
    <property type="project" value="RHEA"/>
</dbReference>
<dbReference type="GO" id="GO:0050511">
    <property type="term" value="F:undecaprenyldiphospho-muramoylpentapeptide beta-N-acetylglucosaminyltransferase activity"/>
    <property type="evidence" value="ECO:0007669"/>
    <property type="project" value="UniProtKB-UniRule"/>
</dbReference>
<dbReference type="GO" id="GO:0005975">
    <property type="term" value="P:carbohydrate metabolic process"/>
    <property type="evidence" value="ECO:0007669"/>
    <property type="project" value="InterPro"/>
</dbReference>
<dbReference type="GO" id="GO:0051301">
    <property type="term" value="P:cell division"/>
    <property type="evidence" value="ECO:0007669"/>
    <property type="project" value="UniProtKB-KW"/>
</dbReference>
<dbReference type="GO" id="GO:0071555">
    <property type="term" value="P:cell wall organization"/>
    <property type="evidence" value="ECO:0007669"/>
    <property type="project" value="UniProtKB-KW"/>
</dbReference>
<dbReference type="GO" id="GO:0030259">
    <property type="term" value="P:lipid glycosylation"/>
    <property type="evidence" value="ECO:0007669"/>
    <property type="project" value="UniProtKB-UniRule"/>
</dbReference>
<dbReference type="GO" id="GO:0009252">
    <property type="term" value="P:peptidoglycan biosynthetic process"/>
    <property type="evidence" value="ECO:0007669"/>
    <property type="project" value="UniProtKB-UniRule"/>
</dbReference>
<dbReference type="GO" id="GO:0008360">
    <property type="term" value="P:regulation of cell shape"/>
    <property type="evidence" value="ECO:0007669"/>
    <property type="project" value="UniProtKB-KW"/>
</dbReference>
<dbReference type="CDD" id="cd03785">
    <property type="entry name" value="GT28_MurG"/>
    <property type="match status" value="1"/>
</dbReference>
<dbReference type="Gene3D" id="3.40.50.2000">
    <property type="entry name" value="Glycogen Phosphorylase B"/>
    <property type="match status" value="2"/>
</dbReference>
<dbReference type="HAMAP" id="MF_00033">
    <property type="entry name" value="MurG"/>
    <property type="match status" value="1"/>
</dbReference>
<dbReference type="InterPro" id="IPR006009">
    <property type="entry name" value="GlcNAc_MurG"/>
</dbReference>
<dbReference type="InterPro" id="IPR007235">
    <property type="entry name" value="Glyco_trans_28_C"/>
</dbReference>
<dbReference type="InterPro" id="IPR004276">
    <property type="entry name" value="GlycoTrans_28_N"/>
</dbReference>
<dbReference type="PANTHER" id="PTHR21015:SF22">
    <property type="entry name" value="GLYCOSYLTRANSFERASE"/>
    <property type="match status" value="1"/>
</dbReference>
<dbReference type="PANTHER" id="PTHR21015">
    <property type="entry name" value="UDP-N-ACETYLGLUCOSAMINE--N-ACETYLMURAMYL-(PENTAPEPTIDE) PYROPHOSPHORYL-UNDECAPRENOL N-ACETYLGLUCOSAMINE TRANSFERASE 1"/>
    <property type="match status" value="1"/>
</dbReference>
<dbReference type="Pfam" id="PF04101">
    <property type="entry name" value="Glyco_tran_28_C"/>
    <property type="match status" value="1"/>
</dbReference>
<dbReference type="Pfam" id="PF03033">
    <property type="entry name" value="Glyco_transf_28"/>
    <property type="match status" value="1"/>
</dbReference>
<dbReference type="SUPFAM" id="SSF53756">
    <property type="entry name" value="UDP-Glycosyltransferase/glycogen phosphorylase"/>
    <property type="match status" value="1"/>
</dbReference>
<comment type="function">
    <text evidence="1">Cell wall formation. Catalyzes the transfer of a GlcNAc subunit on undecaprenyl-pyrophosphoryl-MurNAc-pentapeptide (lipid intermediate I) to form undecaprenyl-pyrophosphoryl-MurNAc-(pentapeptide)GlcNAc (lipid intermediate II).</text>
</comment>
<comment type="catalytic activity">
    <reaction evidence="1">
        <text>di-trans,octa-cis-undecaprenyl diphospho-N-acetyl-alpha-D-muramoyl-L-alanyl-D-glutamyl-meso-2,6-diaminopimeloyl-D-alanyl-D-alanine + UDP-N-acetyl-alpha-D-glucosamine = di-trans,octa-cis-undecaprenyl diphospho-[N-acetyl-alpha-D-glucosaminyl-(1-&gt;4)]-N-acetyl-alpha-D-muramoyl-L-alanyl-D-glutamyl-meso-2,6-diaminopimeloyl-D-alanyl-D-alanine + UDP + H(+)</text>
        <dbReference type="Rhea" id="RHEA:31227"/>
        <dbReference type="ChEBI" id="CHEBI:15378"/>
        <dbReference type="ChEBI" id="CHEBI:57705"/>
        <dbReference type="ChEBI" id="CHEBI:58223"/>
        <dbReference type="ChEBI" id="CHEBI:61387"/>
        <dbReference type="ChEBI" id="CHEBI:61388"/>
        <dbReference type="EC" id="2.4.1.227"/>
    </reaction>
</comment>
<comment type="pathway">
    <text evidence="1">Cell wall biogenesis; peptidoglycan biosynthesis.</text>
</comment>
<comment type="subcellular location">
    <subcellularLocation>
        <location evidence="1">Cell membrane</location>
        <topology evidence="1">Peripheral membrane protein</topology>
        <orientation evidence="1">Cytoplasmic side</orientation>
    </subcellularLocation>
</comment>
<comment type="similarity">
    <text evidence="1">Belongs to the glycosyltransferase 28 family. MurG subfamily.</text>
</comment>
<sequence>MSRILLAGGGTAGHVNPLLALADVLKVSGHATFALGTSEGIESRLVPNSGIDFFTIPKLPFPRRTSRHILCFPFKFFSSVKLVRSILIEHKIQVVVGFGGYVAAPAYAAAISLNIPYVVHESNARPGLANLLAAHFAKCVGISVIGALPCGKLVGTPIRRDLTAAASFDPVLAKEKLGLDPVRKLLLVFGGSQGSAKINMHMRAALPRVLKLCDEKNYLWQVLHITGYGDSIDVNMPHYSSVRYMDSMGYALSAADLVVSRAGSSTVAELCTFGIPAIYIPYPFGNGEQRRNVSHMESAARIIQENDLSQIRLEDELLELMTDDERREAMSIAAKRFAICNAAQNTASLIELALSS</sequence>
<organism>
    <name type="scientific">Tropheryma whipplei (strain Twist)</name>
    <name type="common">Whipple's bacillus</name>
    <dbReference type="NCBI Taxonomy" id="203267"/>
    <lineage>
        <taxon>Bacteria</taxon>
        <taxon>Bacillati</taxon>
        <taxon>Actinomycetota</taxon>
        <taxon>Actinomycetes</taxon>
        <taxon>Micrococcales</taxon>
        <taxon>Tropherymataceae</taxon>
        <taxon>Tropheryma</taxon>
    </lineage>
</organism>